<comment type="function">
    <text evidence="1">Activation of pyruvate formate-lyase under anaerobic conditions by generation of an organic free radical, using S-adenosylmethionine and reduced flavodoxin as cosubstrates to produce 5'-deoxy-adenosine.</text>
</comment>
<comment type="catalytic activity">
    <reaction>
        <text>glycyl-[formate C-acetyltransferase] + reduced [flavodoxin] + S-adenosyl-L-methionine = glycin-2-yl radical-[formate C-acetyltransferase] + semiquinone [flavodoxin] + 5'-deoxyadenosine + L-methionine + H(+)</text>
        <dbReference type="Rhea" id="RHEA:19225"/>
        <dbReference type="Rhea" id="RHEA-COMP:10622"/>
        <dbReference type="Rhea" id="RHEA-COMP:12190"/>
        <dbReference type="Rhea" id="RHEA-COMP:12191"/>
        <dbReference type="Rhea" id="RHEA-COMP:14480"/>
        <dbReference type="ChEBI" id="CHEBI:15378"/>
        <dbReference type="ChEBI" id="CHEBI:17319"/>
        <dbReference type="ChEBI" id="CHEBI:29947"/>
        <dbReference type="ChEBI" id="CHEBI:32722"/>
        <dbReference type="ChEBI" id="CHEBI:57618"/>
        <dbReference type="ChEBI" id="CHEBI:57844"/>
        <dbReference type="ChEBI" id="CHEBI:59789"/>
        <dbReference type="ChEBI" id="CHEBI:140311"/>
        <dbReference type="EC" id="1.97.1.4"/>
    </reaction>
</comment>
<comment type="cofactor">
    <cofactor evidence="1">
        <name>[4Fe-4S] cluster</name>
        <dbReference type="ChEBI" id="CHEBI:49883"/>
    </cofactor>
    <text evidence="1">Binds 1 [4Fe-4S] cluster. The cluster is coordinated with 3 cysteines and an exchangeable S-adenosyl-L-methionine.</text>
</comment>
<comment type="subcellular location">
    <subcellularLocation>
        <location evidence="1">Cytoplasm</location>
    </subcellularLocation>
</comment>
<comment type="similarity">
    <text evidence="4">Belongs to the organic radical-activating enzymes family.</text>
</comment>
<organism>
    <name type="scientific">Staphylococcus aureus (strain USA300)</name>
    <dbReference type="NCBI Taxonomy" id="367830"/>
    <lineage>
        <taxon>Bacteria</taxon>
        <taxon>Bacillati</taxon>
        <taxon>Bacillota</taxon>
        <taxon>Bacilli</taxon>
        <taxon>Bacillales</taxon>
        <taxon>Staphylococcaceae</taxon>
        <taxon>Staphylococcus</taxon>
    </lineage>
</organism>
<protein>
    <recommendedName>
        <fullName>Pyruvate formate-lyase-activating enzyme</fullName>
        <shortName>PFL-activating enzyme</shortName>
        <ecNumber>1.97.1.4</ecNumber>
    </recommendedName>
</protein>
<reference key="1">
    <citation type="journal article" date="2006" name="Lancet">
        <title>Complete genome sequence of USA300, an epidemic clone of community-acquired meticillin-resistant Staphylococcus aureus.</title>
        <authorList>
            <person name="Diep B.A."/>
            <person name="Gill S.R."/>
            <person name="Chang R.F."/>
            <person name="Phan T.H."/>
            <person name="Chen J.H."/>
            <person name="Davidson M.G."/>
            <person name="Lin F."/>
            <person name="Lin J."/>
            <person name="Carleton H.A."/>
            <person name="Mongodin E.F."/>
            <person name="Sensabaugh G.F."/>
            <person name="Perdreau-Remington F."/>
        </authorList>
    </citation>
    <scope>NUCLEOTIDE SEQUENCE [LARGE SCALE GENOMIC DNA]</scope>
    <source>
        <strain>USA300</strain>
    </source>
</reference>
<evidence type="ECO:0000250" key="1"/>
<evidence type="ECO:0000250" key="2">
    <source>
        <dbReference type="UniProtKB" id="P0A9N4"/>
    </source>
</evidence>
<evidence type="ECO:0000255" key="3">
    <source>
        <dbReference type="PROSITE-ProRule" id="PRU01266"/>
    </source>
</evidence>
<evidence type="ECO:0000305" key="4"/>
<accession>Q2FK43</accession>
<name>PFLA_STAA3</name>
<dbReference type="EC" id="1.97.1.4"/>
<dbReference type="EMBL" id="CP000255">
    <property type="protein sequence ID" value="ABD21373.1"/>
    <property type="molecule type" value="Genomic_DNA"/>
</dbReference>
<dbReference type="RefSeq" id="WP_000911657.1">
    <property type="nucleotide sequence ID" value="NZ_CP027476.1"/>
</dbReference>
<dbReference type="SMR" id="Q2FK43"/>
<dbReference type="KEGG" id="saa:SAUSA300_0221"/>
<dbReference type="HOGENOM" id="CLU_058969_1_1_9"/>
<dbReference type="OMA" id="IGVPNKR"/>
<dbReference type="Proteomes" id="UP000001939">
    <property type="component" value="Chromosome"/>
</dbReference>
<dbReference type="GO" id="GO:0005737">
    <property type="term" value="C:cytoplasm"/>
    <property type="evidence" value="ECO:0007669"/>
    <property type="project" value="UniProtKB-SubCell"/>
</dbReference>
<dbReference type="GO" id="GO:0051539">
    <property type="term" value="F:4 iron, 4 sulfur cluster binding"/>
    <property type="evidence" value="ECO:0007669"/>
    <property type="project" value="UniProtKB-KW"/>
</dbReference>
<dbReference type="GO" id="GO:0043365">
    <property type="term" value="F:[formate-C-acetyltransferase]-activating enzyme activity"/>
    <property type="evidence" value="ECO:0007669"/>
    <property type="project" value="UniProtKB-EC"/>
</dbReference>
<dbReference type="GO" id="GO:0046872">
    <property type="term" value="F:metal ion binding"/>
    <property type="evidence" value="ECO:0007669"/>
    <property type="project" value="UniProtKB-KW"/>
</dbReference>
<dbReference type="GO" id="GO:0006006">
    <property type="term" value="P:glucose metabolic process"/>
    <property type="evidence" value="ECO:0007669"/>
    <property type="project" value="UniProtKB-KW"/>
</dbReference>
<dbReference type="CDD" id="cd01335">
    <property type="entry name" value="Radical_SAM"/>
    <property type="match status" value="1"/>
</dbReference>
<dbReference type="Gene3D" id="3.20.20.70">
    <property type="entry name" value="Aldolase class I"/>
    <property type="match status" value="1"/>
</dbReference>
<dbReference type="InterPro" id="IPR013785">
    <property type="entry name" value="Aldolase_TIM"/>
</dbReference>
<dbReference type="InterPro" id="IPR040074">
    <property type="entry name" value="BssD/PflA/YjjW"/>
</dbReference>
<dbReference type="InterPro" id="IPR034457">
    <property type="entry name" value="Organic_radical-activating"/>
</dbReference>
<dbReference type="InterPro" id="IPR012839">
    <property type="entry name" value="Organic_radical_activase"/>
</dbReference>
<dbReference type="InterPro" id="IPR012838">
    <property type="entry name" value="PFL1_activating"/>
</dbReference>
<dbReference type="InterPro" id="IPR034465">
    <property type="entry name" value="Pyruvate_for-lyase_activase"/>
</dbReference>
<dbReference type="InterPro" id="IPR001989">
    <property type="entry name" value="Radical_activat_CS"/>
</dbReference>
<dbReference type="InterPro" id="IPR007197">
    <property type="entry name" value="rSAM"/>
</dbReference>
<dbReference type="NCBIfam" id="TIGR02493">
    <property type="entry name" value="PFLA"/>
    <property type="match status" value="1"/>
</dbReference>
<dbReference type="PANTHER" id="PTHR30352:SF5">
    <property type="entry name" value="PYRUVATE FORMATE-LYASE 1-ACTIVATING ENZYME"/>
    <property type="match status" value="1"/>
</dbReference>
<dbReference type="PANTHER" id="PTHR30352">
    <property type="entry name" value="PYRUVATE FORMATE-LYASE-ACTIVATING ENZYME"/>
    <property type="match status" value="1"/>
</dbReference>
<dbReference type="Pfam" id="PF13353">
    <property type="entry name" value="Fer4_12"/>
    <property type="match status" value="1"/>
</dbReference>
<dbReference type="Pfam" id="PF04055">
    <property type="entry name" value="Radical_SAM"/>
    <property type="match status" value="1"/>
</dbReference>
<dbReference type="PIRSF" id="PIRSF000371">
    <property type="entry name" value="PFL_act_enz"/>
    <property type="match status" value="1"/>
</dbReference>
<dbReference type="SFLD" id="SFLDG01118">
    <property type="entry name" value="activating_enzymes__group_2"/>
    <property type="match status" value="1"/>
</dbReference>
<dbReference type="SFLD" id="SFLDF00278">
    <property type="entry name" value="pyruvate_formate-lyase_activas"/>
    <property type="match status" value="1"/>
</dbReference>
<dbReference type="SUPFAM" id="SSF102114">
    <property type="entry name" value="Radical SAM enzymes"/>
    <property type="match status" value="1"/>
</dbReference>
<dbReference type="PROSITE" id="PS01087">
    <property type="entry name" value="RADICAL_ACTIVATING"/>
    <property type="match status" value="1"/>
</dbReference>
<dbReference type="PROSITE" id="PS51918">
    <property type="entry name" value="RADICAL_SAM"/>
    <property type="match status" value="1"/>
</dbReference>
<proteinExistence type="inferred from homology"/>
<keyword id="KW-0004">4Fe-4S</keyword>
<keyword id="KW-0119">Carbohydrate metabolism</keyword>
<keyword id="KW-0963">Cytoplasm</keyword>
<keyword id="KW-0313">Glucose metabolism</keyword>
<keyword id="KW-0408">Iron</keyword>
<keyword id="KW-0411">Iron-sulfur</keyword>
<keyword id="KW-0479">Metal-binding</keyword>
<keyword id="KW-0560">Oxidoreductase</keyword>
<keyword id="KW-0949">S-adenosyl-L-methionine</keyword>
<feature type="chain" id="PRO_0000271708" description="Pyruvate formate-lyase-activating enzyme">
    <location>
        <begin position="1"/>
        <end position="251"/>
    </location>
</feature>
<feature type="domain" description="Radical SAM core" evidence="3">
    <location>
        <begin position="15"/>
        <end position="244"/>
    </location>
</feature>
<feature type="binding site" evidence="2">
    <location>
        <position position="29"/>
    </location>
    <ligand>
        <name>[4Fe-4S] cluster</name>
        <dbReference type="ChEBI" id="CHEBI:49883"/>
        <note>4Fe-4S-S-AdoMet</note>
    </ligand>
</feature>
<feature type="binding site" evidence="2">
    <location>
        <position position="33"/>
    </location>
    <ligand>
        <name>[4Fe-4S] cluster</name>
        <dbReference type="ChEBI" id="CHEBI:49883"/>
        <note>4Fe-4S-S-AdoMet</note>
    </ligand>
</feature>
<feature type="binding site" evidence="2">
    <location>
        <begin position="35"/>
        <end position="37"/>
    </location>
    <ligand>
        <name>S-adenosyl-L-methionine</name>
        <dbReference type="ChEBI" id="CHEBI:59789"/>
    </ligand>
</feature>
<feature type="binding site" evidence="2">
    <location>
        <position position="36"/>
    </location>
    <ligand>
        <name>[4Fe-4S] cluster</name>
        <dbReference type="ChEBI" id="CHEBI:49883"/>
        <note>4Fe-4S-S-AdoMet</note>
    </ligand>
</feature>
<feature type="binding site" evidence="2">
    <location>
        <position position="79"/>
    </location>
    <ligand>
        <name>S-adenosyl-L-methionine</name>
        <dbReference type="ChEBI" id="CHEBI:59789"/>
    </ligand>
</feature>
<feature type="binding site" evidence="2">
    <location>
        <begin position="134"/>
        <end position="136"/>
    </location>
    <ligand>
        <name>S-adenosyl-L-methionine</name>
        <dbReference type="ChEBI" id="CHEBI:59789"/>
    </ligand>
</feature>
<feature type="binding site" evidence="2">
    <location>
        <position position="207"/>
    </location>
    <ligand>
        <name>S-adenosyl-L-methionine</name>
        <dbReference type="ChEBI" id="CHEBI:59789"/>
    </ligand>
</feature>
<sequence length="251" mass="28499">MLKGHLHSVESLGTVDGPGLRYILFTQGCLLRCLYCHNPDTWKISEPSREVTVDEMVNEILPYKPYFDASGGGVTVSGGEPLLQMPFLEKLFAELKENGVHTCLDTSAGCANDTKAFQRHFEELQKHTDLILLDIKHIDNDKHIRLTGKPNTHILNFARKLSDMKQPVWIRHVLVPGYSDDKDDLIKLGEFINSLDNVEKFEILPYHQLGVHKWKTLGIAYELEDVEAPDDEAVKAAYRYVNFKGKIPVEL</sequence>
<gene>
    <name type="primary">pflA</name>
    <name type="ordered locus">SAUSA300_0221</name>
</gene>